<accession>Q9PIL7</accession>
<accession>Q0PBM7</accession>
<gene>
    <name evidence="1" type="primary">carB</name>
    <name type="ordered locus">Cj0279</name>
</gene>
<organism>
    <name type="scientific">Campylobacter jejuni subsp. jejuni serotype O:2 (strain ATCC 700819 / NCTC 11168)</name>
    <dbReference type="NCBI Taxonomy" id="192222"/>
    <lineage>
        <taxon>Bacteria</taxon>
        <taxon>Pseudomonadati</taxon>
        <taxon>Campylobacterota</taxon>
        <taxon>Epsilonproteobacteria</taxon>
        <taxon>Campylobacterales</taxon>
        <taxon>Campylobacteraceae</taxon>
        <taxon>Campylobacter</taxon>
    </lineage>
</organism>
<evidence type="ECO:0000255" key="1">
    <source>
        <dbReference type="HAMAP-Rule" id="MF_01210"/>
    </source>
</evidence>
<name>CARB_CAMJE</name>
<sequence>MPKRTDIKSILLIGSGPIVIGQACEFDYSGTQAAKTLKELGYRVVLINSNPATIMTDPEFADATYIEPITKESILSIIKKEKIDAILPTMGGQVALNVAMEVYESGLLGDVKFLGANPEAIKKGEDRQVFKECMKKIGMDLPKSMYAYNYDEALKAVDEIDFPLMIRASYTLGGAGSGVVYNMDEFKELTNTALALSPIHEILIEESLLGWKEYEMEVIRDRADNCIIVCSIENIDPMGVHTGDSITIAPALTLTDKEYQVMRNASFAILREIGVDTGGSNVQFAINPKNGRMIVIEMNPRVSRSSALASKATGYPIAKVATLLAVGFSLDEIKNDITGTPASFEPVIDYIVTKIPRFTFEKFPGANTTLGTAMKSVGEVMAIGRTFKESIQKALCSLERSLSGFDRVKFEDRNDLVFKIRNANEKRLLYVAQAFREGFSVEELYELCKIDPWFLTQIKEIVDFEEQIDMDILNNKALLRKAKTMGFSDKMIALLVNLKDNLELSQNDIYYVRMKQKIIAEFSEVDTCAGEFEALTPYLYSSINVSELTQSKNDAKDKKEKKVMIIGGGPNRIGQGIEFDYACVHASFALKDMGIKTIMYNCNPETVSTDYDTSDILYFEPIDFEHLRAVIEREKPDGVIVHFGGQTPLKFAKRLSAFGAKIIGTSARVIDMAEDRKKFAEFITKLGINQPKNSTATSVEEAVLKASDIGYPVLVRPSYVLGGRAMRVVNDEAELRLYMQEAVDVSDKSPVLIDQFLDNATEIDVDAICDGKDVYVAGIMEHIEEAGIHSGDSACSLPPCNIDEKMQEFIAQKTADIALNLGVVGLLNIQFALHNNELYMIEVNPRASRTIPFVSKATGIPLAKVATRVMWQGNLKEALKFYDTFKVVNFDTKILRPKTPKYMSVKEAVFPFAKLSGSDLELGPEMRSTGEVMGISKDFANSYAKSQIASFNHLPEQGVVFISLKDKDKKYTKKIAAEYVKLGFKLMATGGTCKEILESGFECELVHKISEGRPNVEDKLKNGEIHLVINTSDSHSFKGDTKKIRENIIRFKIPYFTNLRSALAGAKSIKAIQSKSCLDVKSLQEWLKS</sequence>
<dbReference type="EC" id="6.3.4.16" evidence="1"/>
<dbReference type="EC" id="6.3.5.5" evidence="1"/>
<dbReference type="EMBL" id="AL111168">
    <property type="protein sequence ID" value="CAL34432.1"/>
    <property type="molecule type" value="Genomic_DNA"/>
</dbReference>
<dbReference type="PIR" id="E81446">
    <property type="entry name" value="E81446"/>
</dbReference>
<dbReference type="RefSeq" id="WP_002858661.1">
    <property type="nucleotide sequence ID" value="NZ_SZUC01000004.1"/>
</dbReference>
<dbReference type="RefSeq" id="YP_002343720.1">
    <property type="nucleotide sequence ID" value="NC_002163.1"/>
</dbReference>
<dbReference type="SMR" id="Q9PIL7"/>
<dbReference type="STRING" id="192222.Cj0279"/>
<dbReference type="PaxDb" id="192222-Cj0279"/>
<dbReference type="EnsemblBacteria" id="CAL34432">
    <property type="protein sequence ID" value="CAL34432"/>
    <property type="gene ID" value="Cj0279"/>
</dbReference>
<dbReference type="GeneID" id="904603"/>
<dbReference type="KEGG" id="cje:Cj0279"/>
<dbReference type="PATRIC" id="fig|192222.6.peg.272"/>
<dbReference type="eggNOG" id="COG0458">
    <property type="taxonomic scope" value="Bacteria"/>
</dbReference>
<dbReference type="HOGENOM" id="CLU_000513_1_0_7"/>
<dbReference type="OrthoDB" id="9804197at2"/>
<dbReference type="UniPathway" id="UPA00068">
    <property type="reaction ID" value="UER00171"/>
</dbReference>
<dbReference type="UniPathway" id="UPA00070">
    <property type="reaction ID" value="UER00115"/>
</dbReference>
<dbReference type="Proteomes" id="UP000000799">
    <property type="component" value="Chromosome"/>
</dbReference>
<dbReference type="GO" id="GO:0005737">
    <property type="term" value="C:cytoplasm"/>
    <property type="evidence" value="ECO:0007669"/>
    <property type="project" value="TreeGrafter"/>
</dbReference>
<dbReference type="GO" id="GO:0005524">
    <property type="term" value="F:ATP binding"/>
    <property type="evidence" value="ECO:0007669"/>
    <property type="project" value="UniProtKB-UniRule"/>
</dbReference>
<dbReference type="GO" id="GO:0004087">
    <property type="term" value="F:carbamoyl-phosphate synthase (ammonia) activity"/>
    <property type="evidence" value="ECO:0007669"/>
    <property type="project" value="RHEA"/>
</dbReference>
<dbReference type="GO" id="GO:0004088">
    <property type="term" value="F:carbamoyl-phosphate synthase (glutamine-hydrolyzing) activity"/>
    <property type="evidence" value="ECO:0007669"/>
    <property type="project" value="UniProtKB-UniRule"/>
</dbReference>
<dbReference type="GO" id="GO:0046872">
    <property type="term" value="F:metal ion binding"/>
    <property type="evidence" value="ECO:0007669"/>
    <property type="project" value="UniProtKB-KW"/>
</dbReference>
<dbReference type="GO" id="GO:0044205">
    <property type="term" value="P:'de novo' UMP biosynthetic process"/>
    <property type="evidence" value="ECO:0007669"/>
    <property type="project" value="UniProtKB-UniRule"/>
</dbReference>
<dbReference type="GO" id="GO:0006541">
    <property type="term" value="P:glutamine metabolic process"/>
    <property type="evidence" value="ECO:0007669"/>
    <property type="project" value="TreeGrafter"/>
</dbReference>
<dbReference type="GO" id="GO:0006526">
    <property type="term" value="P:L-arginine biosynthetic process"/>
    <property type="evidence" value="ECO:0007669"/>
    <property type="project" value="UniProtKB-UniRule"/>
</dbReference>
<dbReference type="CDD" id="cd01424">
    <property type="entry name" value="MGS_CPS_II"/>
    <property type="match status" value="1"/>
</dbReference>
<dbReference type="FunFam" id="1.10.1030.10:FF:000002">
    <property type="entry name" value="Carbamoyl-phosphate synthase large chain"/>
    <property type="match status" value="1"/>
</dbReference>
<dbReference type="FunFam" id="3.30.1490.20:FF:000001">
    <property type="entry name" value="Carbamoyl-phosphate synthase large chain"/>
    <property type="match status" value="1"/>
</dbReference>
<dbReference type="FunFam" id="3.30.470.20:FF:000007">
    <property type="entry name" value="Carbamoyl-phosphate synthase large chain"/>
    <property type="match status" value="1"/>
</dbReference>
<dbReference type="FunFam" id="3.30.470.20:FF:000013">
    <property type="entry name" value="Carbamoyl-phosphate synthase large chain"/>
    <property type="match status" value="1"/>
</dbReference>
<dbReference type="FunFam" id="3.40.50.20:FF:000001">
    <property type="entry name" value="Carbamoyl-phosphate synthase large chain"/>
    <property type="match status" value="2"/>
</dbReference>
<dbReference type="Gene3D" id="3.40.50.20">
    <property type="match status" value="2"/>
</dbReference>
<dbReference type="Gene3D" id="3.30.470.20">
    <property type="entry name" value="ATP-grasp fold, B domain"/>
    <property type="match status" value="2"/>
</dbReference>
<dbReference type="Gene3D" id="1.10.1030.10">
    <property type="entry name" value="Carbamoyl-phosphate synthetase, large subunit oligomerisation domain"/>
    <property type="match status" value="1"/>
</dbReference>
<dbReference type="Gene3D" id="3.40.50.1380">
    <property type="entry name" value="Methylglyoxal synthase-like domain"/>
    <property type="match status" value="1"/>
</dbReference>
<dbReference type="HAMAP" id="MF_01210_B">
    <property type="entry name" value="CPSase_L_chain_B"/>
    <property type="match status" value="1"/>
</dbReference>
<dbReference type="InterPro" id="IPR011761">
    <property type="entry name" value="ATP-grasp"/>
</dbReference>
<dbReference type="InterPro" id="IPR006275">
    <property type="entry name" value="CarbamoylP_synth_lsu"/>
</dbReference>
<dbReference type="InterPro" id="IPR005480">
    <property type="entry name" value="CarbamoylP_synth_lsu_oligo"/>
</dbReference>
<dbReference type="InterPro" id="IPR036897">
    <property type="entry name" value="CarbamoylP_synth_lsu_oligo_sf"/>
</dbReference>
<dbReference type="InterPro" id="IPR005479">
    <property type="entry name" value="CbamoylP_synth_lsu-like_ATP-bd"/>
</dbReference>
<dbReference type="InterPro" id="IPR005483">
    <property type="entry name" value="CbamoylP_synth_lsu_CPSase_dom"/>
</dbReference>
<dbReference type="InterPro" id="IPR011607">
    <property type="entry name" value="MGS-like_dom"/>
</dbReference>
<dbReference type="InterPro" id="IPR036914">
    <property type="entry name" value="MGS-like_dom_sf"/>
</dbReference>
<dbReference type="InterPro" id="IPR033937">
    <property type="entry name" value="MGS_CPS_CarB"/>
</dbReference>
<dbReference type="InterPro" id="IPR016185">
    <property type="entry name" value="PreATP-grasp_dom_sf"/>
</dbReference>
<dbReference type="NCBIfam" id="TIGR01369">
    <property type="entry name" value="CPSaseII_lrg"/>
    <property type="match status" value="1"/>
</dbReference>
<dbReference type="NCBIfam" id="NF003671">
    <property type="entry name" value="PRK05294.1"/>
    <property type="match status" value="1"/>
</dbReference>
<dbReference type="NCBIfam" id="NF009455">
    <property type="entry name" value="PRK12815.1"/>
    <property type="match status" value="1"/>
</dbReference>
<dbReference type="PANTHER" id="PTHR11405:SF53">
    <property type="entry name" value="CARBAMOYL-PHOSPHATE SYNTHASE [AMMONIA], MITOCHONDRIAL"/>
    <property type="match status" value="1"/>
</dbReference>
<dbReference type="PANTHER" id="PTHR11405">
    <property type="entry name" value="CARBAMOYLTRANSFERASE FAMILY MEMBER"/>
    <property type="match status" value="1"/>
</dbReference>
<dbReference type="Pfam" id="PF02786">
    <property type="entry name" value="CPSase_L_D2"/>
    <property type="match status" value="2"/>
</dbReference>
<dbReference type="Pfam" id="PF02787">
    <property type="entry name" value="CPSase_L_D3"/>
    <property type="match status" value="1"/>
</dbReference>
<dbReference type="Pfam" id="PF02142">
    <property type="entry name" value="MGS"/>
    <property type="match status" value="1"/>
</dbReference>
<dbReference type="PRINTS" id="PR00098">
    <property type="entry name" value="CPSASE"/>
</dbReference>
<dbReference type="SMART" id="SM01096">
    <property type="entry name" value="CPSase_L_D3"/>
    <property type="match status" value="1"/>
</dbReference>
<dbReference type="SMART" id="SM00851">
    <property type="entry name" value="MGS"/>
    <property type="match status" value="1"/>
</dbReference>
<dbReference type="SUPFAM" id="SSF48108">
    <property type="entry name" value="Carbamoyl phosphate synthetase, large subunit connection domain"/>
    <property type="match status" value="1"/>
</dbReference>
<dbReference type="SUPFAM" id="SSF56059">
    <property type="entry name" value="Glutathione synthetase ATP-binding domain-like"/>
    <property type="match status" value="2"/>
</dbReference>
<dbReference type="SUPFAM" id="SSF52335">
    <property type="entry name" value="Methylglyoxal synthase-like"/>
    <property type="match status" value="1"/>
</dbReference>
<dbReference type="SUPFAM" id="SSF52440">
    <property type="entry name" value="PreATP-grasp domain"/>
    <property type="match status" value="2"/>
</dbReference>
<dbReference type="PROSITE" id="PS50975">
    <property type="entry name" value="ATP_GRASP"/>
    <property type="match status" value="2"/>
</dbReference>
<dbReference type="PROSITE" id="PS00866">
    <property type="entry name" value="CPSASE_1"/>
    <property type="match status" value="2"/>
</dbReference>
<dbReference type="PROSITE" id="PS00867">
    <property type="entry name" value="CPSASE_2"/>
    <property type="match status" value="2"/>
</dbReference>
<dbReference type="PROSITE" id="PS51855">
    <property type="entry name" value="MGS"/>
    <property type="match status" value="1"/>
</dbReference>
<proteinExistence type="inferred from homology"/>
<feature type="chain" id="PRO_0000144998" description="Carbamoyl phosphate synthase large chain">
    <location>
        <begin position="1"/>
        <end position="1089"/>
    </location>
</feature>
<feature type="domain" description="ATP-grasp 1" evidence="1">
    <location>
        <begin position="131"/>
        <end position="326"/>
    </location>
</feature>
<feature type="domain" description="ATP-grasp 2" evidence="1">
    <location>
        <begin position="680"/>
        <end position="871"/>
    </location>
</feature>
<feature type="domain" description="MGS-like" evidence="1">
    <location>
        <begin position="952"/>
        <end position="1089"/>
    </location>
</feature>
<feature type="region of interest" description="Carboxyphosphate synthetic domain" evidence="1">
    <location>
        <begin position="1"/>
        <end position="399"/>
    </location>
</feature>
<feature type="region of interest" description="Oligomerization domain" evidence="1">
    <location>
        <begin position="400"/>
        <end position="553"/>
    </location>
</feature>
<feature type="region of interest" description="Carbamoyl phosphate synthetic domain" evidence="1">
    <location>
        <begin position="554"/>
        <end position="951"/>
    </location>
</feature>
<feature type="region of interest" description="Allosteric domain" evidence="1">
    <location>
        <begin position="952"/>
        <end position="1089"/>
    </location>
</feature>
<feature type="binding site" evidence="1">
    <location>
        <position position="127"/>
    </location>
    <ligand>
        <name>ATP</name>
        <dbReference type="ChEBI" id="CHEBI:30616"/>
        <label>1</label>
    </ligand>
</feature>
<feature type="binding site" evidence="1">
    <location>
        <position position="167"/>
    </location>
    <ligand>
        <name>ATP</name>
        <dbReference type="ChEBI" id="CHEBI:30616"/>
        <label>1</label>
    </ligand>
</feature>
<feature type="binding site" evidence="1">
    <location>
        <position position="173"/>
    </location>
    <ligand>
        <name>ATP</name>
        <dbReference type="ChEBI" id="CHEBI:30616"/>
        <label>1</label>
    </ligand>
</feature>
<feature type="binding site" evidence="1">
    <location>
        <position position="174"/>
    </location>
    <ligand>
        <name>ATP</name>
        <dbReference type="ChEBI" id="CHEBI:30616"/>
        <label>1</label>
    </ligand>
</feature>
<feature type="binding site" evidence="1">
    <location>
        <position position="206"/>
    </location>
    <ligand>
        <name>ATP</name>
        <dbReference type="ChEBI" id="CHEBI:30616"/>
        <label>1</label>
    </ligand>
</feature>
<feature type="binding site" evidence="1">
    <location>
        <position position="208"/>
    </location>
    <ligand>
        <name>ATP</name>
        <dbReference type="ChEBI" id="CHEBI:30616"/>
        <label>1</label>
    </ligand>
</feature>
<feature type="binding site" evidence="1">
    <location>
        <position position="213"/>
    </location>
    <ligand>
        <name>ATP</name>
        <dbReference type="ChEBI" id="CHEBI:30616"/>
        <label>1</label>
    </ligand>
</feature>
<feature type="binding site" evidence="1">
    <location>
        <position position="239"/>
    </location>
    <ligand>
        <name>ATP</name>
        <dbReference type="ChEBI" id="CHEBI:30616"/>
        <label>1</label>
    </ligand>
</feature>
<feature type="binding site" evidence="1">
    <location>
        <position position="240"/>
    </location>
    <ligand>
        <name>ATP</name>
        <dbReference type="ChEBI" id="CHEBI:30616"/>
        <label>1</label>
    </ligand>
</feature>
<feature type="binding site" evidence="1">
    <location>
        <position position="241"/>
    </location>
    <ligand>
        <name>ATP</name>
        <dbReference type="ChEBI" id="CHEBI:30616"/>
        <label>1</label>
    </ligand>
</feature>
<feature type="binding site" evidence="1">
    <location>
        <position position="283"/>
    </location>
    <ligand>
        <name>ATP</name>
        <dbReference type="ChEBI" id="CHEBI:30616"/>
        <label>1</label>
    </ligand>
</feature>
<feature type="binding site" evidence="1">
    <location>
        <position position="283"/>
    </location>
    <ligand>
        <name>Mg(2+)</name>
        <dbReference type="ChEBI" id="CHEBI:18420"/>
        <label>1</label>
    </ligand>
</feature>
<feature type="binding site" evidence="1">
    <location>
        <position position="283"/>
    </location>
    <ligand>
        <name>Mn(2+)</name>
        <dbReference type="ChEBI" id="CHEBI:29035"/>
        <label>1</label>
    </ligand>
</feature>
<feature type="binding site" evidence="1">
    <location>
        <position position="297"/>
    </location>
    <ligand>
        <name>ATP</name>
        <dbReference type="ChEBI" id="CHEBI:30616"/>
        <label>1</label>
    </ligand>
</feature>
<feature type="binding site" evidence="1">
    <location>
        <position position="297"/>
    </location>
    <ligand>
        <name>Mg(2+)</name>
        <dbReference type="ChEBI" id="CHEBI:18420"/>
        <label>1</label>
    </ligand>
</feature>
<feature type="binding site" evidence="1">
    <location>
        <position position="297"/>
    </location>
    <ligand>
        <name>Mg(2+)</name>
        <dbReference type="ChEBI" id="CHEBI:18420"/>
        <label>2</label>
    </ligand>
</feature>
<feature type="binding site" evidence="1">
    <location>
        <position position="297"/>
    </location>
    <ligand>
        <name>Mn(2+)</name>
        <dbReference type="ChEBI" id="CHEBI:29035"/>
        <label>1</label>
    </ligand>
</feature>
<feature type="binding site" evidence="1">
    <location>
        <position position="297"/>
    </location>
    <ligand>
        <name>Mn(2+)</name>
        <dbReference type="ChEBI" id="CHEBI:29035"/>
        <label>2</label>
    </ligand>
</feature>
<feature type="binding site" evidence="1">
    <location>
        <position position="299"/>
    </location>
    <ligand>
        <name>Mg(2+)</name>
        <dbReference type="ChEBI" id="CHEBI:18420"/>
        <label>2</label>
    </ligand>
</feature>
<feature type="binding site" evidence="1">
    <location>
        <position position="299"/>
    </location>
    <ligand>
        <name>Mn(2+)</name>
        <dbReference type="ChEBI" id="CHEBI:29035"/>
        <label>2</label>
    </ligand>
</feature>
<feature type="binding site" evidence="1">
    <location>
        <position position="716"/>
    </location>
    <ligand>
        <name>ATP</name>
        <dbReference type="ChEBI" id="CHEBI:30616"/>
        <label>2</label>
    </ligand>
</feature>
<feature type="binding site" evidence="1">
    <location>
        <position position="755"/>
    </location>
    <ligand>
        <name>ATP</name>
        <dbReference type="ChEBI" id="CHEBI:30616"/>
        <label>2</label>
    </ligand>
</feature>
<feature type="binding site" evidence="1">
    <location>
        <position position="757"/>
    </location>
    <ligand>
        <name>ATP</name>
        <dbReference type="ChEBI" id="CHEBI:30616"/>
        <label>2</label>
    </ligand>
</feature>
<feature type="binding site" evidence="1">
    <location>
        <position position="762"/>
    </location>
    <ligand>
        <name>ATP</name>
        <dbReference type="ChEBI" id="CHEBI:30616"/>
        <label>2</label>
    </ligand>
</feature>
<feature type="binding site" evidence="1">
    <location>
        <position position="787"/>
    </location>
    <ligand>
        <name>ATP</name>
        <dbReference type="ChEBI" id="CHEBI:30616"/>
        <label>2</label>
    </ligand>
</feature>
<feature type="binding site" evidence="1">
    <location>
        <position position="788"/>
    </location>
    <ligand>
        <name>ATP</name>
        <dbReference type="ChEBI" id="CHEBI:30616"/>
        <label>2</label>
    </ligand>
</feature>
<feature type="binding site" evidence="1">
    <location>
        <position position="789"/>
    </location>
    <ligand>
        <name>ATP</name>
        <dbReference type="ChEBI" id="CHEBI:30616"/>
        <label>2</label>
    </ligand>
</feature>
<feature type="binding site" evidence="1">
    <location>
        <position position="790"/>
    </location>
    <ligand>
        <name>ATP</name>
        <dbReference type="ChEBI" id="CHEBI:30616"/>
        <label>2</label>
    </ligand>
</feature>
<feature type="binding site" evidence="1">
    <location>
        <position position="830"/>
    </location>
    <ligand>
        <name>ATP</name>
        <dbReference type="ChEBI" id="CHEBI:30616"/>
        <label>2</label>
    </ligand>
</feature>
<feature type="binding site" evidence="1">
    <location>
        <position position="830"/>
    </location>
    <ligand>
        <name>Mg(2+)</name>
        <dbReference type="ChEBI" id="CHEBI:18420"/>
        <label>3</label>
    </ligand>
</feature>
<feature type="binding site" evidence="1">
    <location>
        <position position="830"/>
    </location>
    <ligand>
        <name>Mn(2+)</name>
        <dbReference type="ChEBI" id="CHEBI:29035"/>
        <label>3</label>
    </ligand>
</feature>
<feature type="binding site" evidence="1">
    <location>
        <position position="842"/>
    </location>
    <ligand>
        <name>ATP</name>
        <dbReference type="ChEBI" id="CHEBI:30616"/>
        <label>2</label>
    </ligand>
</feature>
<feature type="binding site" evidence="1">
    <location>
        <position position="842"/>
    </location>
    <ligand>
        <name>Mg(2+)</name>
        <dbReference type="ChEBI" id="CHEBI:18420"/>
        <label>3</label>
    </ligand>
</feature>
<feature type="binding site" evidence="1">
    <location>
        <position position="842"/>
    </location>
    <ligand>
        <name>Mg(2+)</name>
        <dbReference type="ChEBI" id="CHEBI:18420"/>
        <label>4</label>
    </ligand>
</feature>
<feature type="binding site" evidence="1">
    <location>
        <position position="842"/>
    </location>
    <ligand>
        <name>Mn(2+)</name>
        <dbReference type="ChEBI" id="CHEBI:29035"/>
        <label>3</label>
    </ligand>
</feature>
<feature type="binding site" evidence="1">
    <location>
        <position position="842"/>
    </location>
    <ligand>
        <name>Mn(2+)</name>
        <dbReference type="ChEBI" id="CHEBI:29035"/>
        <label>4</label>
    </ligand>
</feature>
<feature type="binding site" evidence="1">
    <location>
        <position position="844"/>
    </location>
    <ligand>
        <name>Mg(2+)</name>
        <dbReference type="ChEBI" id="CHEBI:18420"/>
        <label>4</label>
    </ligand>
</feature>
<feature type="binding site" evidence="1">
    <location>
        <position position="844"/>
    </location>
    <ligand>
        <name>Mn(2+)</name>
        <dbReference type="ChEBI" id="CHEBI:29035"/>
        <label>4</label>
    </ligand>
</feature>
<protein>
    <recommendedName>
        <fullName evidence="1">Carbamoyl phosphate synthase large chain</fullName>
        <ecNumber evidence="1">6.3.4.16</ecNumber>
        <ecNumber evidence="1">6.3.5.5</ecNumber>
    </recommendedName>
    <alternativeName>
        <fullName evidence="1">Carbamoyl phosphate synthetase ammonia chain</fullName>
    </alternativeName>
</protein>
<keyword id="KW-0028">Amino-acid biosynthesis</keyword>
<keyword id="KW-0055">Arginine biosynthesis</keyword>
<keyword id="KW-0067">ATP-binding</keyword>
<keyword id="KW-0436">Ligase</keyword>
<keyword id="KW-0460">Magnesium</keyword>
<keyword id="KW-0464">Manganese</keyword>
<keyword id="KW-0479">Metal-binding</keyword>
<keyword id="KW-0547">Nucleotide-binding</keyword>
<keyword id="KW-0665">Pyrimidine biosynthesis</keyword>
<keyword id="KW-1185">Reference proteome</keyword>
<keyword id="KW-0677">Repeat</keyword>
<reference key="1">
    <citation type="journal article" date="2000" name="Nature">
        <title>The genome sequence of the food-borne pathogen Campylobacter jejuni reveals hypervariable sequences.</title>
        <authorList>
            <person name="Parkhill J."/>
            <person name="Wren B.W."/>
            <person name="Mungall K.L."/>
            <person name="Ketley J.M."/>
            <person name="Churcher C.M."/>
            <person name="Basham D."/>
            <person name="Chillingworth T."/>
            <person name="Davies R.M."/>
            <person name="Feltwell T."/>
            <person name="Holroyd S."/>
            <person name="Jagels K."/>
            <person name="Karlyshev A.V."/>
            <person name="Moule S."/>
            <person name="Pallen M.J."/>
            <person name="Penn C.W."/>
            <person name="Quail M.A."/>
            <person name="Rajandream M.A."/>
            <person name="Rutherford K.M."/>
            <person name="van Vliet A.H.M."/>
            <person name="Whitehead S."/>
            <person name="Barrell B.G."/>
        </authorList>
    </citation>
    <scope>NUCLEOTIDE SEQUENCE [LARGE SCALE GENOMIC DNA]</scope>
    <source>
        <strain>ATCC 700819 / NCTC 11168</strain>
    </source>
</reference>
<comment type="function">
    <text evidence="1">Large subunit of the glutamine-dependent carbamoyl phosphate synthetase (CPSase). CPSase catalyzes the formation of carbamoyl phosphate from the ammonia moiety of glutamine, carbonate, and phosphate donated by ATP, constituting the first step of 2 biosynthetic pathways, one leading to arginine and/or urea and the other to pyrimidine nucleotides. The large subunit (synthetase) binds the substrates ammonia (free or transferred from glutamine from the small subunit), hydrogencarbonate and ATP and carries out an ATP-coupled ligase reaction, activating hydrogencarbonate by forming carboxy phosphate which reacts with ammonia to form carbamoyl phosphate.</text>
</comment>
<comment type="catalytic activity">
    <reaction evidence="1">
        <text>hydrogencarbonate + L-glutamine + 2 ATP + H2O = carbamoyl phosphate + L-glutamate + 2 ADP + phosphate + 2 H(+)</text>
        <dbReference type="Rhea" id="RHEA:18633"/>
        <dbReference type="ChEBI" id="CHEBI:15377"/>
        <dbReference type="ChEBI" id="CHEBI:15378"/>
        <dbReference type="ChEBI" id="CHEBI:17544"/>
        <dbReference type="ChEBI" id="CHEBI:29985"/>
        <dbReference type="ChEBI" id="CHEBI:30616"/>
        <dbReference type="ChEBI" id="CHEBI:43474"/>
        <dbReference type="ChEBI" id="CHEBI:58228"/>
        <dbReference type="ChEBI" id="CHEBI:58359"/>
        <dbReference type="ChEBI" id="CHEBI:456216"/>
        <dbReference type="EC" id="6.3.5.5"/>
    </reaction>
</comment>
<comment type="catalytic activity">
    <molecule>Carbamoyl phosphate synthase large chain</molecule>
    <reaction evidence="1">
        <text>hydrogencarbonate + NH4(+) + 2 ATP = carbamoyl phosphate + 2 ADP + phosphate + 2 H(+)</text>
        <dbReference type="Rhea" id="RHEA:18029"/>
        <dbReference type="ChEBI" id="CHEBI:15378"/>
        <dbReference type="ChEBI" id="CHEBI:17544"/>
        <dbReference type="ChEBI" id="CHEBI:28938"/>
        <dbReference type="ChEBI" id="CHEBI:30616"/>
        <dbReference type="ChEBI" id="CHEBI:43474"/>
        <dbReference type="ChEBI" id="CHEBI:58228"/>
        <dbReference type="ChEBI" id="CHEBI:456216"/>
        <dbReference type="EC" id="6.3.4.16"/>
    </reaction>
</comment>
<comment type="cofactor">
    <cofactor evidence="1">
        <name>Mg(2+)</name>
        <dbReference type="ChEBI" id="CHEBI:18420"/>
    </cofactor>
    <cofactor evidence="1">
        <name>Mn(2+)</name>
        <dbReference type="ChEBI" id="CHEBI:29035"/>
    </cofactor>
    <text evidence="1">Binds 4 Mg(2+) or Mn(2+) ions per subunit.</text>
</comment>
<comment type="pathway">
    <text evidence="1">Amino-acid biosynthesis; L-arginine biosynthesis; carbamoyl phosphate from bicarbonate: step 1/1.</text>
</comment>
<comment type="pathway">
    <text evidence="1">Pyrimidine metabolism; UMP biosynthesis via de novo pathway; (S)-dihydroorotate from bicarbonate: step 1/3.</text>
</comment>
<comment type="subunit">
    <text evidence="1">Composed of two chains; the small (or glutamine) chain promotes the hydrolysis of glutamine to ammonia, which is used by the large (or ammonia) chain to synthesize carbamoyl phosphate. Tetramer of heterodimers (alpha,beta)4.</text>
</comment>
<comment type="domain">
    <text evidence="1">The large subunit is composed of 2 ATP-grasp domains that are involved in binding the 2 ATP molecules needed for carbamoyl phosphate synthesis. The N-terminal ATP-grasp domain (referred to as the carboxyphosphate synthetic component) catalyzes the ATP-dependent phosphorylation of hydrogencarbonate to carboxyphosphate and the subsequent nucleophilic attack by ammonia to form a carbamate intermediate. The C-terminal ATP-grasp domain (referred to as the carbamoyl phosphate synthetic component) then catalyzes the phosphorylation of carbamate with the second ATP to form the end product carbamoyl phosphate. The reactive and unstable enzyme intermediates are sequentially channeled from one active site to the next through the interior of the protein over a distance of at least 96 A.</text>
</comment>
<comment type="similarity">
    <text evidence="1">Belongs to the CarB family.</text>
</comment>